<accession>Q2L924</accession>
<proteinExistence type="inferred from homology"/>
<reference key="1">
    <citation type="journal article" date="2006" name="BMC Genomics">
        <title>The complete chloroplast genome sequence of Gossypium hirsutum: organization and phylogenetic relationships to other angiosperms.</title>
        <authorList>
            <person name="Lee S.-B."/>
            <person name="Kaittanis C."/>
            <person name="Jansen R.K."/>
            <person name="Hostetler J.B."/>
            <person name="Tallon L.J."/>
            <person name="Town C.D."/>
            <person name="Daniell H."/>
        </authorList>
    </citation>
    <scope>NUCLEOTIDE SEQUENCE [LARGE SCALE GENOMIC DNA]</scope>
    <source>
        <strain>cv. Coker 310FR</strain>
    </source>
</reference>
<sequence length="31" mass="3373">MPTITSYFGFLLAALTITSALFIGLSKIRLI</sequence>
<organism>
    <name type="scientific">Gossypium hirsutum</name>
    <name type="common">Upland cotton</name>
    <name type="synonym">Gossypium mexicanum</name>
    <dbReference type="NCBI Taxonomy" id="3635"/>
    <lineage>
        <taxon>Eukaryota</taxon>
        <taxon>Viridiplantae</taxon>
        <taxon>Streptophyta</taxon>
        <taxon>Embryophyta</taxon>
        <taxon>Tracheophyta</taxon>
        <taxon>Spermatophyta</taxon>
        <taxon>Magnoliopsida</taxon>
        <taxon>eudicotyledons</taxon>
        <taxon>Gunneridae</taxon>
        <taxon>Pentapetalae</taxon>
        <taxon>rosids</taxon>
        <taxon>malvids</taxon>
        <taxon>Malvales</taxon>
        <taxon>Malvaceae</taxon>
        <taxon>Malvoideae</taxon>
        <taxon>Gossypium</taxon>
    </lineage>
</organism>
<keyword id="KW-0150">Chloroplast</keyword>
<keyword id="KW-0249">Electron transport</keyword>
<keyword id="KW-0472">Membrane</keyword>
<keyword id="KW-0602">Photosynthesis</keyword>
<keyword id="KW-0934">Plastid</keyword>
<keyword id="KW-1185">Reference proteome</keyword>
<keyword id="KW-0793">Thylakoid</keyword>
<keyword id="KW-0812">Transmembrane</keyword>
<keyword id="KW-1133">Transmembrane helix</keyword>
<keyword id="KW-0813">Transport</keyword>
<name>PETL_GOSHI</name>
<evidence type="ECO:0000255" key="1">
    <source>
        <dbReference type="HAMAP-Rule" id="MF_00433"/>
    </source>
</evidence>
<comment type="function">
    <text evidence="1">Component of the cytochrome b6-f complex, which mediates electron transfer between photosystem II (PSII) and photosystem I (PSI), cyclic electron flow around PSI, and state transitions. PetL is important for photoautotrophic growth as well as for electron transfer efficiency and stability of the cytochrome b6-f complex.</text>
</comment>
<comment type="subunit">
    <text evidence="1">The 4 large subunits of the cytochrome b6-f complex are cytochrome b6, subunit IV (17 kDa polypeptide, PetD), cytochrome f and the Rieske protein, while the 4 small subunits are PetG, PetL, PetM and PetN. The complex functions as a dimer.</text>
</comment>
<comment type="subcellular location">
    <subcellularLocation>
        <location evidence="1">Plastid</location>
        <location evidence="1">Chloroplast thylakoid membrane</location>
        <topology evidence="1">Single-pass membrane protein</topology>
    </subcellularLocation>
</comment>
<comment type="similarity">
    <text evidence="1">Belongs to the PetL family.</text>
</comment>
<geneLocation type="chloroplast"/>
<feature type="chain" id="PRO_0000233674" description="Cytochrome b6-f complex subunit 6">
    <location>
        <begin position="1"/>
        <end position="31"/>
    </location>
</feature>
<feature type="transmembrane region" description="Helical" evidence="1">
    <location>
        <begin position="4"/>
        <end position="24"/>
    </location>
</feature>
<gene>
    <name evidence="1" type="primary">petL</name>
</gene>
<dbReference type="EMBL" id="DQ345959">
    <property type="protein sequence ID" value="ABC73646.1"/>
    <property type="molecule type" value="Genomic_DNA"/>
</dbReference>
<dbReference type="RefSeq" id="YP_538953.1">
    <property type="nucleotide sequence ID" value="NC_007944.1"/>
</dbReference>
<dbReference type="SMR" id="Q2L924"/>
<dbReference type="GeneID" id="3989167"/>
<dbReference type="KEGG" id="ghi:3989167"/>
<dbReference type="OrthoDB" id="47358at41938"/>
<dbReference type="Proteomes" id="UP000189702">
    <property type="component" value="Chloroplast Pltd"/>
</dbReference>
<dbReference type="GO" id="GO:0009535">
    <property type="term" value="C:chloroplast thylakoid membrane"/>
    <property type="evidence" value="ECO:0007669"/>
    <property type="project" value="UniProtKB-SubCell"/>
</dbReference>
<dbReference type="GO" id="GO:0009512">
    <property type="term" value="C:cytochrome b6f complex"/>
    <property type="evidence" value="ECO:0007669"/>
    <property type="project" value="InterPro"/>
</dbReference>
<dbReference type="GO" id="GO:0045158">
    <property type="term" value="F:electron transporter, transferring electrons within cytochrome b6/f complex of photosystem II activity"/>
    <property type="evidence" value="ECO:0007669"/>
    <property type="project" value="UniProtKB-UniRule"/>
</dbReference>
<dbReference type="GO" id="GO:0015979">
    <property type="term" value="P:photosynthesis"/>
    <property type="evidence" value="ECO:0007669"/>
    <property type="project" value="UniProtKB-KW"/>
</dbReference>
<dbReference type="HAMAP" id="MF_00433">
    <property type="entry name" value="Cytb6_f_PetL"/>
    <property type="match status" value="1"/>
</dbReference>
<dbReference type="InterPro" id="IPR007802">
    <property type="entry name" value="Cyt_b6/f_cplx_su6"/>
</dbReference>
<dbReference type="PANTHER" id="PTHR37266">
    <property type="entry name" value="CYTOCHROME B6-F COMPLEX SUBUNIT 6"/>
    <property type="match status" value="1"/>
</dbReference>
<dbReference type="PANTHER" id="PTHR37266:SF1">
    <property type="entry name" value="CYTOCHROME B6-F COMPLEX SUBUNIT 6"/>
    <property type="match status" value="1"/>
</dbReference>
<dbReference type="Pfam" id="PF05115">
    <property type="entry name" value="PetL"/>
    <property type="match status" value="1"/>
</dbReference>
<dbReference type="SUPFAM" id="SSF103436">
    <property type="entry name" value="PetL subunit of the cytochrome b6f complex"/>
    <property type="match status" value="1"/>
</dbReference>
<protein>
    <recommendedName>
        <fullName evidence="1">Cytochrome b6-f complex subunit 6</fullName>
    </recommendedName>
    <alternativeName>
        <fullName evidence="1">Cytochrome b6-f complex subunit PetL</fullName>
    </alternativeName>
    <alternativeName>
        <fullName evidence="1">Cytochrome b6-f complex subunit VI</fullName>
    </alternativeName>
</protein>